<reference key="1">
    <citation type="journal article" date="2016" name="Front. Microbiol.">
        <title>The complete genome sequence of hyperthermophile Dictyoglomus turgidum DSM 6724 reveals a specialized carbohydrate fermentor.</title>
        <authorList>
            <person name="Brumm P.J."/>
            <person name="Gowda K."/>
            <person name="Robb F.T."/>
            <person name="Mead D.A."/>
        </authorList>
    </citation>
    <scope>NUCLEOTIDE SEQUENCE [LARGE SCALE GENOMIC DNA]</scope>
    <source>
        <strain>DSM 6724 / Z-1310</strain>
    </source>
</reference>
<proteinExistence type="inferred from homology"/>
<dbReference type="EC" id="2.1.1.77" evidence="1"/>
<dbReference type="EMBL" id="CP001251">
    <property type="protein sequence ID" value="ACK42668.1"/>
    <property type="molecule type" value="Genomic_DNA"/>
</dbReference>
<dbReference type="RefSeq" id="WP_012583746.1">
    <property type="nucleotide sequence ID" value="NC_011661.1"/>
</dbReference>
<dbReference type="RefSeq" id="YP_002353282.1">
    <property type="nucleotide sequence ID" value="NC_011661.1"/>
</dbReference>
<dbReference type="SMR" id="B8E0T1"/>
<dbReference type="STRING" id="515635.Dtur_1394"/>
<dbReference type="EnsemblBacteria" id="ACK42668">
    <property type="protein sequence ID" value="ACK42668"/>
    <property type="gene ID" value="Dtur_1394"/>
</dbReference>
<dbReference type="KEGG" id="dtu:Dtur_1394"/>
<dbReference type="PATRIC" id="fig|515635.4.peg.1441"/>
<dbReference type="eggNOG" id="COG2518">
    <property type="taxonomic scope" value="Bacteria"/>
</dbReference>
<dbReference type="HOGENOM" id="CLU_055432_2_0_0"/>
<dbReference type="InParanoid" id="B8E0T1"/>
<dbReference type="OrthoDB" id="4035289at2"/>
<dbReference type="Proteomes" id="UP000007719">
    <property type="component" value="Chromosome"/>
</dbReference>
<dbReference type="GO" id="GO:0005737">
    <property type="term" value="C:cytoplasm"/>
    <property type="evidence" value="ECO:0000318"/>
    <property type="project" value="GO_Central"/>
</dbReference>
<dbReference type="GO" id="GO:0004719">
    <property type="term" value="F:protein-L-isoaspartate (D-aspartate) O-methyltransferase activity"/>
    <property type="evidence" value="ECO:0000318"/>
    <property type="project" value="GO_Central"/>
</dbReference>
<dbReference type="GO" id="GO:0032259">
    <property type="term" value="P:methylation"/>
    <property type="evidence" value="ECO:0007669"/>
    <property type="project" value="UniProtKB-KW"/>
</dbReference>
<dbReference type="GO" id="GO:0036211">
    <property type="term" value="P:protein modification process"/>
    <property type="evidence" value="ECO:0007669"/>
    <property type="project" value="UniProtKB-UniRule"/>
</dbReference>
<dbReference type="GO" id="GO:0030091">
    <property type="term" value="P:protein repair"/>
    <property type="evidence" value="ECO:0007669"/>
    <property type="project" value="UniProtKB-UniRule"/>
</dbReference>
<dbReference type="CDD" id="cd02440">
    <property type="entry name" value="AdoMet_MTases"/>
    <property type="match status" value="1"/>
</dbReference>
<dbReference type="FunFam" id="3.40.50.150:FF:000010">
    <property type="entry name" value="Protein-L-isoaspartate O-methyltransferase"/>
    <property type="match status" value="1"/>
</dbReference>
<dbReference type="Gene3D" id="3.40.50.150">
    <property type="entry name" value="Vaccinia Virus protein VP39"/>
    <property type="match status" value="1"/>
</dbReference>
<dbReference type="HAMAP" id="MF_00090">
    <property type="entry name" value="PIMT"/>
    <property type="match status" value="1"/>
</dbReference>
<dbReference type="InterPro" id="IPR000682">
    <property type="entry name" value="PCMT"/>
</dbReference>
<dbReference type="InterPro" id="IPR029063">
    <property type="entry name" value="SAM-dependent_MTases_sf"/>
</dbReference>
<dbReference type="NCBIfam" id="TIGR00080">
    <property type="entry name" value="pimt"/>
    <property type="match status" value="1"/>
</dbReference>
<dbReference type="NCBIfam" id="NF001453">
    <property type="entry name" value="PRK00312.1"/>
    <property type="match status" value="1"/>
</dbReference>
<dbReference type="PANTHER" id="PTHR11579">
    <property type="entry name" value="PROTEIN-L-ISOASPARTATE O-METHYLTRANSFERASE"/>
    <property type="match status" value="1"/>
</dbReference>
<dbReference type="PANTHER" id="PTHR11579:SF0">
    <property type="entry name" value="PROTEIN-L-ISOASPARTATE(D-ASPARTATE) O-METHYLTRANSFERASE"/>
    <property type="match status" value="1"/>
</dbReference>
<dbReference type="Pfam" id="PF01135">
    <property type="entry name" value="PCMT"/>
    <property type="match status" value="1"/>
</dbReference>
<dbReference type="SUPFAM" id="SSF53335">
    <property type="entry name" value="S-adenosyl-L-methionine-dependent methyltransferases"/>
    <property type="match status" value="1"/>
</dbReference>
<dbReference type="PROSITE" id="PS01279">
    <property type="entry name" value="PCMT"/>
    <property type="match status" value="1"/>
</dbReference>
<keyword id="KW-0963">Cytoplasm</keyword>
<keyword id="KW-0489">Methyltransferase</keyword>
<keyword id="KW-1185">Reference proteome</keyword>
<keyword id="KW-0949">S-adenosyl-L-methionine</keyword>
<keyword id="KW-0808">Transferase</keyword>
<organism>
    <name type="scientific">Dictyoglomus turgidum (strain DSM 6724 / Z-1310)</name>
    <dbReference type="NCBI Taxonomy" id="515635"/>
    <lineage>
        <taxon>Bacteria</taxon>
        <taxon>Pseudomonadati</taxon>
        <taxon>Dictyoglomota</taxon>
        <taxon>Dictyoglomia</taxon>
        <taxon>Dictyoglomales</taxon>
        <taxon>Dictyoglomaceae</taxon>
        <taxon>Dictyoglomus</taxon>
    </lineage>
</organism>
<gene>
    <name evidence="1" type="primary">pcm</name>
    <name type="ordered locus">Dtur_1394</name>
</gene>
<protein>
    <recommendedName>
        <fullName evidence="1">Protein-L-isoaspartate O-methyltransferase</fullName>
        <ecNumber evidence="1">2.1.1.77</ecNumber>
    </recommendedName>
    <alternativeName>
        <fullName evidence="1">L-isoaspartyl protein carboxyl methyltransferase</fullName>
    </alternativeName>
    <alternativeName>
        <fullName evidence="1">Protein L-isoaspartyl methyltransferase</fullName>
    </alternativeName>
    <alternativeName>
        <fullName evidence="1">Protein-beta-aspartate methyltransferase</fullName>
        <shortName evidence="1">PIMT</shortName>
    </alternativeName>
</protein>
<comment type="function">
    <text evidence="1">Catalyzes the methyl esterification of L-isoaspartyl residues in peptides and proteins that result from spontaneous decomposition of normal L-aspartyl and L-asparaginyl residues. It plays a role in the repair and/or degradation of damaged proteins.</text>
</comment>
<comment type="catalytic activity">
    <reaction evidence="1">
        <text>[protein]-L-isoaspartate + S-adenosyl-L-methionine = [protein]-L-isoaspartate alpha-methyl ester + S-adenosyl-L-homocysteine</text>
        <dbReference type="Rhea" id="RHEA:12705"/>
        <dbReference type="Rhea" id="RHEA-COMP:12143"/>
        <dbReference type="Rhea" id="RHEA-COMP:12144"/>
        <dbReference type="ChEBI" id="CHEBI:57856"/>
        <dbReference type="ChEBI" id="CHEBI:59789"/>
        <dbReference type="ChEBI" id="CHEBI:90596"/>
        <dbReference type="ChEBI" id="CHEBI:90598"/>
        <dbReference type="EC" id="2.1.1.77"/>
    </reaction>
</comment>
<comment type="subcellular location">
    <subcellularLocation>
        <location evidence="1">Cytoplasm</location>
    </subcellularLocation>
</comment>
<comment type="similarity">
    <text evidence="1">Belongs to the methyltransferase superfamily. L-isoaspartyl/D-aspartyl protein methyltransferase family.</text>
</comment>
<evidence type="ECO:0000255" key="1">
    <source>
        <dbReference type="HAMAP-Rule" id="MF_00090"/>
    </source>
</evidence>
<accession>B8E0T1</accession>
<feature type="chain" id="PRO_1000192389" description="Protein-L-isoaspartate O-methyltransferase">
    <location>
        <begin position="1"/>
        <end position="220"/>
    </location>
</feature>
<feature type="active site" evidence="1">
    <location>
        <position position="68"/>
    </location>
</feature>
<sequence>MSFKDFDAPKYKYKRKSLVEILKNEGIKSQKVLDAILKVPRHIFVPSEYLDLAYENEALPIGYEQTISQPYIVALMTEALDLKGDEKVLEIGTGSGYQTAILAELAKEVYTIERIRELSEEAKKRIKLLGYSNVYFKVGDGTLGWEEFSPYDRIIVTAASYDIPNPLKEQLKDGGVMVIPIGGRDFQYLYKITKKNGNFYRENLGGVRFVPLKGEYGWKD</sequence>
<name>PIMT_DICTD</name>